<dbReference type="EC" id="2.7.2.8" evidence="1"/>
<dbReference type="EMBL" id="Z49111">
    <property type="protein sequence ID" value="CAB82481.1"/>
    <property type="molecule type" value="Genomic_DNA"/>
</dbReference>
<dbReference type="SMR" id="Q9LCS6"/>
<dbReference type="STRING" id="1901.BB341_23950"/>
<dbReference type="eggNOG" id="COG0548">
    <property type="taxonomic scope" value="Bacteria"/>
</dbReference>
<dbReference type="UniPathway" id="UPA00068">
    <property type="reaction ID" value="UER00107"/>
</dbReference>
<dbReference type="GO" id="GO:0005737">
    <property type="term" value="C:cytoplasm"/>
    <property type="evidence" value="ECO:0007669"/>
    <property type="project" value="UniProtKB-SubCell"/>
</dbReference>
<dbReference type="GO" id="GO:0003991">
    <property type="term" value="F:acetylglutamate kinase activity"/>
    <property type="evidence" value="ECO:0007669"/>
    <property type="project" value="UniProtKB-UniRule"/>
</dbReference>
<dbReference type="GO" id="GO:0005524">
    <property type="term" value="F:ATP binding"/>
    <property type="evidence" value="ECO:0007669"/>
    <property type="project" value="UniProtKB-UniRule"/>
</dbReference>
<dbReference type="GO" id="GO:0042450">
    <property type="term" value="P:arginine biosynthetic process via ornithine"/>
    <property type="evidence" value="ECO:0007669"/>
    <property type="project" value="UniProtKB-UniRule"/>
</dbReference>
<dbReference type="GO" id="GO:0006526">
    <property type="term" value="P:L-arginine biosynthetic process"/>
    <property type="evidence" value="ECO:0007669"/>
    <property type="project" value="UniProtKB-UniPathway"/>
</dbReference>
<dbReference type="CDD" id="cd04250">
    <property type="entry name" value="AAK_NAGK-C"/>
    <property type="match status" value="1"/>
</dbReference>
<dbReference type="FunFam" id="3.40.1160.10:FF:000015">
    <property type="entry name" value="Acetylglutamate kinase"/>
    <property type="match status" value="1"/>
</dbReference>
<dbReference type="Gene3D" id="3.40.1160.10">
    <property type="entry name" value="Acetylglutamate kinase-like"/>
    <property type="match status" value="1"/>
</dbReference>
<dbReference type="HAMAP" id="MF_00082">
    <property type="entry name" value="ArgB"/>
    <property type="match status" value="1"/>
</dbReference>
<dbReference type="InterPro" id="IPR036393">
    <property type="entry name" value="AceGlu_kinase-like_sf"/>
</dbReference>
<dbReference type="InterPro" id="IPR004662">
    <property type="entry name" value="AcgluKinase_fam"/>
</dbReference>
<dbReference type="InterPro" id="IPR037528">
    <property type="entry name" value="ArgB"/>
</dbReference>
<dbReference type="InterPro" id="IPR001048">
    <property type="entry name" value="Asp/Glu/Uridylate_kinase"/>
</dbReference>
<dbReference type="InterPro" id="IPR001057">
    <property type="entry name" value="Glu/AcGlu_kinase"/>
</dbReference>
<dbReference type="InterPro" id="IPR041727">
    <property type="entry name" value="NAGK-C"/>
</dbReference>
<dbReference type="NCBIfam" id="TIGR00761">
    <property type="entry name" value="argB"/>
    <property type="match status" value="1"/>
</dbReference>
<dbReference type="PANTHER" id="PTHR23342">
    <property type="entry name" value="N-ACETYLGLUTAMATE SYNTHASE"/>
    <property type="match status" value="1"/>
</dbReference>
<dbReference type="PANTHER" id="PTHR23342:SF0">
    <property type="entry name" value="N-ACETYLGLUTAMATE SYNTHASE, MITOCHONDRIAL"/>
    <property type="match status" value="1"/>
</dbReference>
<dbReference type="Pfam" id="PF00696">
    <property type="entry name" value="AA_kinase"/>
    <property type="match status" value="1"/>
</dbReference>
<dbReference type="PIRSF" id="PIRSF000728">
    <property type="entry name" value="NAGK"/>
    <property type="match status" value="1"/>
</dbReference>
<dbReference type="PRINTS" id="PR00474">
    <property type="entry name" value="GLU5KINASE"/>
</dbReference>
<dbReference type="SUPFAM" id="SSF53633">
    <property type="entry name" value="Carbamate kinase-like"/>
    <property type="match status" value="1"/>
</dbReference>
<evidence type="ECO:0000255" key="1">
    <source>
        <dbReference type="HAMAP-Rule" id="MF_00082"/>
    </source>
</evidence>
<keyword id="KW-0028">Amino-acid biosynthesis</keyword>
<keyword id="KW-0055">Arginine biosynthesis</keyword>
<keyword id="KW-0067">ATP-binding</keyword>
<keyword id="KW-0963">Cytoplasm</keyword>
<keyword id="KW-0418">Kinase</keyword>
<keyword id="KW-0547">Nucleotide-binding</keyword>
<keyword id="KW-0808">Transferase</keyword>
<organism>
    <name type="scientific">Streptomyces clavuligerus</name>
    <dbReference type="NCBI Taxonomy" id="1901"/>
    <lineage>
        <taxon>Bacteria</taxon>
        <taxon>Bacillati</taxon>
        <taxon>Actinomycetota</taxon>
        <taxon>Actinomycetes</taxon>
        <taxon>Kitasatosporales</taxon>
        <taxon>Streptomycetaceae</taxon>
        <taxon>Streptomyces</taxon>
    </lineage>
</organism>
<proteinExistence type="inferred from homology"/>
<comment type="function">
    <text evidence="1">Catalyzes the ATP-dependent phosphorylation of N-acetyl-L-glutamate.</text>
</comment>
<comment type="catalytic activity">
    <reaction evidence="1">
        <text>N-acetyl-L-glutamate + ATP = N-acetyl-L-glutamyl 5-phosphate + ADP</text>
        <dbReference type="Rhea" id="RHEA:14629"/>
        <dbReference type="ChEBI" id="CHEBI:30616"/>
        <dbReference type="ChEBI" id="CHEBI:44337"/>
        <dbReference type="ChEBI" id="CHEBI:57936"/>
        <dbReference type="ChEBI" id="CHEBI:456216"/>
        <dbReference type="EC" id="2.7.2.8"/>
    </reaction>
</comment>
<comment type="pathway">
    <text evidence="1">Amino-acid biosynthesis; L-arginine biosynthesis; N(2)-acetyl-L-ornithine from L-glutamate: step 2/4.</text>
</comment>
<comment type="subcellular location">
    <subcellularLocation>
        <location evidence="1">Cytoplasm</location>
    </subcellularLocation>
</comment>
<comment type="similarity">
    <text evidence="1">Belongs to the acetylglutamate kinase family. ArgB subfamily.</text>
</comment>
<accession>Q9LCS6</accession>
<feature type="chain" id="PRO_0000112671" description="Acetylglutamate kinase">
    <location>
        <begin position="1"/>
        <end position="302"/>
    </location>
</feature>
<feature type="binding site" evidence="1">
    <location>
        <begin position="67"/>
        <end position="68"/>
    </location>
    <ligand>
        <name>substrate</name>
    </ligand>
</feature>
<feature type="binding site" evidence="1">
    <location>
        <position position="89"/>
    </location>
    <ligand>
        <name>substrate</name>
    </ligand>
</feature>
<feature type="binding site" evidence="1">
    <location>
        <position position="189"/>
    </location>
    <ligand>
        <name>substrate</name>
    </ligand>
</feature>
<feature type="site" description="Transition state stabilizer" evidence="1">
    <location>
        <position position="32"/>
    </location>
</feature>
<feature type="site" description="Transition state stabilizer" evidence="1">
    <location>
        <position position="250"/>
    </location>
</feature>
<gene>
    <name evidence="1" type="primary">argB</name>
</gene>
<reference key="1">
    <citation type="journal article" date="1992" name="J. Bacteriol.">
        <title>Characterization of the Streptomyces clavuligerus argC gene encoding N-acetylglutamyl-phosphate reductase: expression in Streptomyces lividans and effect on clavulanic acid production.</title>
        <authorList>
            <person name="Ludovice M."/>
            <person name="Martin J.F."/>
            <person name="Carrachas P."/>
            <person name="Liras P."/>
        </authorList>
    </citation>
    <scope>NUCLEOTIDE SEQUENCE [GENOMIC DNA]</scope>
    <source>
        <strain>ATCC 27064 / DSM 738 / JCM 4710 / NBRC 13307 / NCIMB 12785 / NRRL 3585 / VKM Ac-602</strain>
    </source>
</reference>
<sequence>MTRKNNALPKARTLIEALPWLTRHHGKTIVVKFGGNAMVNEELKGAFARPSFLVHHAGLRPVVVHGGGPQISAELDRYGLVSEFKAGLRVTTDEAMDVVRMVLAGQVQRDVWGCSIVHGPLAVGITGEDAHPISATRHRPLIDGEPVDIGRVGEVTRIDTGAVLALLEDGRIPVVSSIARAEDDGHVYNVNADTAAAALAAALGAETLMVLTDVEGLYEDWPNSDEVISRLTASELETLLPDLSSGMVPKMEGCLHAVRNGVRTARVIDGRVPHSILLEIFTDDGVGTMVVPDEPSVSEGTS</sequence>
<name>ARGB_STRCL</name>
<protein>
    <recommendedName>
        <fullName evidence="1">Acetylglutamate kinase</fullName>
        <ecNumber evidence="1">2.7.2.8</ecNumber>
    </recommendedName>
    <alternativeName>
        <fullName evidence="1">N-acetyl-L-glutamate 5-phosphotransferase</fullName>
    </alternativeName>
    <alternativeName>
        <fullName evidence="1">NAG kinase</fullName>
        <shortName evidence="1">NAGK</shortName>
    </alternativeName>
</protein>